<comment type="function">
    <text evidence="1">Involved in the biosynthesis of lipid A, a phosphorylated glycolipid that anchors the lipopolysaccharide to the outer membrane of the cell.</text>
</comment>
<comment type="catalytic activity">
    <reaction evidence="1">
        <text>a (3R)-hydroxyacyl-[ACP] + UDP-N-acetyl-alpha-D-glucosamine = a UDP-3-O-[(3R)-3-hydroxyacyl]-N-acetyl-alpha-D-glucosamine + holo-[ACP]</text>
        <dbReference type="Rhea" id="RHEA:67812"/>
        <dbReference type="Rhea" id="RHEA-COMP:9685"/>
        <dbReference type="Rhea" id="RHEA-COMP:9945"/>
        <dbReference type="ChEBI" id="CHEBI:57705"/>
        <dbReference type="ChEBI" id="CHEBI:64479"/>
        <dbReference type="ChEBI" id="CHEBI:78827"/>
        <dbReference type="ChEBI" id="CHEBI:173225"/>
        <dbReference type="EC" id="2.3.1.129"/>
    </reaction>
</comment>
<comment type="pathway">
    <text evidence="1">Glycolipid biosynthesis; lipid IV(A) biosynthesis; lipid IV(A) from (3R)-3-hydroxytetradecanoyl-[acyl-carrier-protein] and UDP-N-acetyl-alpha-D-glucosamine: step 1/6.</text>
</comment>
<comment type="subunit">
    <text evidence="1">Homotrimer.</text>
</comment>
<comment type="subcellular location">
    <subcellularLocation>
        <location evidence="1">Cytoplasm</location>
    </subcellularLocation>
</comment>
<comment type="similarity">
    <text evidence="1">Belongs to the transferase hexapeptide repeat family. LpxA subfamily.</text>
</comment>
<accession>A5W838</accession>
<name>LPXA_PSEP1</name>
<feature type="chain" id="PRO_1000013173" description="Acyl-[acyl-carrier-protein]--UDP-N-acetylglucosamine O-acyltransferase">
    <location>
        <begin position="1"/>
        <end position="258"/>
    </location>
</feature>
<sequence length="258" mass="28107">MNSIDPRAIIDPSAKLADGVEVGPWSIVGPDVEIGEGTVIGPHVVLKGPTRIGKHNRIFQFSSIGEDTPDLKYKGEPTRLVIGDHNVIREGVTIHRGTVQDRAETTVGDHNLIMAYAHIGHDSVIGNHCILVNNTALAGHVHVGDWAILSGYTLVHQYCHIGAHAFSGMGTAIGKDVPAFVTVFGSPAEARSMNFEGMRRRGFSDEVIHVLRRCYKIVYRQGLTVEDALKELAEPATQHPEVELFRQSILSSARGITR</sequence>
<gene>
    <name evidence="1" type="primary">lpxA</name>
    <name type="ordered locus">Pput_4174</name>
</gene>
<protein>
    <recommendedName>
        <fullName evidence="1">Acyl-[acyl-carrier-protein]--UDP-N-acetylglucosamine O-acyltransferase</fullName>
        <shortName evidence="1">UDP-N-acetylglucosamine acyltransferase</shortName>
        <ecNumber evidence="1">2.3.1.129</ecNumber>
    </recommendedName>
</protein>
<dbReference type="EC" id="2.3.1.129" evidence="1"/>
<dbReference type="EMBL" id="CP000712">
    <property type="protein sequence ID" value="ABQ80298.1"/>
    <property type="molecule type" value="Genomic_DNA"/>
</dbReference>
<dbReference type="SMR" id="A5W838"/>
<dbReference type="KEGG" id="ppf:Pput_4174"/>
<dbReference type="eggNOG" id="COG1043">
    <property type="taxonomic scope" value="Bacteria"/>
</dbReference>
<dbReference type="HOGENOM" id="CLU_061249_0_0_6"/>
<dbReference type="UniPathway" id="UPA00359">
    <property type="reaction ID" value="UER00477"/>
</dbReference>
<dbReference type="GO" id="GO:0005737">
    <property type="term" value="C:cytoplasm"/>
    <property type="evidence" value="ECO:0007669"/>
    <property type="project" value="UniProtKB-SubCell"/>
</dbReference>
<dbReference type="GO" id="GO:0016020">
    <property type="term" value="C:membrane"/>
    <property type="evidence" value="ECO:0007669"/>
    <property type="project" value="GOC"/>
</dbReference>
<dbReference type="GO" id="GO:0008780">
    <property type="term" value="F:acyl-[acyl-carrier-protein]-UDP-N-acetylglucosamine O-acyltransferase activity"/>
    <property type="evidence" value="ECO:0007669"/>
    <property type="project" value="UniProtKB-UniRule"/>
</dbReference>
<dbReference type="GO" id="GO:0009245">
    <property type="term" value="P:lipid A biosynthetic process"/>
    <property type="evidence" value="ECO:0007669"/>
    <property type="project" value="UniProtKB-UniRule"/>
</dbReference>
<dbReference type="CDD" id="cd03351">
    <property type="entry name" value="LbH_UDP-GlcNAc_AT"/>
    <property type="match status" value="1"/>
</dbReference>
<dbReference type="FunFam" id="2.160.10.10:FF:000003">
    <property type="entry name" value="Acyl-[acyl-carrier-protein]--UDP-N-acetylglucosamine O-acyltransferase"/>
    <property type="match status" value="1"/>
</dbReference>
<dbReference type="Gene3D" id="2.160.10.10">
    <property type="entry name" value="Hexapeptide repeat proteins"/>
    <property type="match status" value="1"/>
</dbReference>
<dbReference type="Gene3D" id="1.20.1180.10">
    <property type="entry name" value="Udp N-acetylglucosamine O-acyltransferase, C-terminal domain"/>
    <property type="match status" value="1"/>
</dbReference>
<dbReference type="HAMAP" id="MF_00387">
    <property type="entry name" value="LpxA"/>
    <property type="match status" value="1"/>
</dbReference>
<dbReference type="InterPro" id="IPR029098">
    <property type="entry name" value="Acetyltransf_C"/>
</dbReference>
<dbReference type="InterPro" id="IPR037157">
    <property type="entry name" value="Acetyltransf_C_sf"/>
</dbReference>
<dbReference type="InterPro" id="IPR001451">
    <property type="entry name" value="Hexapep"/>
</dbReference>
<dbReference type="InterPro" id="IPR018357">
    <property type="entry name" value="Hexapep_transf_CS"/>
</dbReference>
<dbReference type="InterPro" id="IPR010137">
    <property type="entry name" value="Lipid_A_LpxA"/>
</dbReference>
<dbReference type="InterPro" id="IPR011004">
    <property type="entry name" value="Trimer_LpxA-like_sf"/>
</dbReference>
<dbReference type="NCBIfam" id="TIGR01852">
    <property type="entry name" value="lipid_A_lpxA"/>
    <property type="match status" value="1"/>
</dbReference>
<dbReference type="NCBIfam" id="NF003657">
    <property type="entry name" value="PRK05289.1"/>
    <property type="match status" value="1"/>
</dbReference>
<dbReference type="PANTHER" id="PTHR43480">
    <property type="entry name" value="ACYL-[ACYL-CARRIER-PROTEIN]--UDP-N-ACETYLGLUCOSAMINE O-ACYLTRANSFERASE"/>
    <property type="match status" value="1"/>
</dbReference>
<dbReference type="PANTHER" id="PTHR43480:SF1">
    <property type="entry name" value="ACYL-[ACYL-CARRIER-PROTEIN]--UDP-N-ACETYLGLUCOSAMINE O-ACYLTRANSFERASE, MITOCHONDRIAL-RELATED"/>
    <property type="match status" value="1"/>
</dbReference>
<dbReference type="Pfam" id="PF13720">
    <property type="entry name" value="Acetyltransf_11"/>
    <property type="match status" value="1"/>
</dbReference>
<dbReference type="Pfam" id="PF00132">
    <property type="entry name" value="Hexapep"/>
    <property type="match status" value="2"/>
</dbReference>
<dbReference type="PIRSF" id="PIRSF000456">
    <property type="entry name" value="UDP-GlcNAc_acltr"/>
    <property type="match status" value="1"/>
</dbReference>
<dbReference type="SUPFAM" id="SSF51161">
    <property type="entry name" value="Trimeric LpxA-like enzymes"/>
    <property type="match status" value="1"/>
</dbReference>
<dbReference type="PROSITE" id="PS00101">
    <property type="entry name" value="HEXAPEP_TRANSFERASES"/>
    <property type="match status" value="1"/>
</dbReference>
<organism>
    <name type="scientific">Pseudomonas putida (strain ATCC 700007 / DSM 6899 / JCM 31910 / BCRC 17059 / LMG 24140 / F1)</name>
    <dbReference type="NCBI Taxonomy" id="351746"/>
    <lineage>
        <taxon>Bacteria</taxon>
        <taxon>Pseudomonadati</taxon>
        <taxon>Pseudomonadota</taxon>
        <taxon>Gammaproteobacteria</taxon>
        <taxon>Pseudomonadales</taxon>
        <taxon>Pseudomonadaceae</taxon>
        <taxon>Pseudomonas</taxon>
    </lineage>
</organism>
<proteinExistence type="inferred from homology"/>
<evidence type="ECO:0000255" key="1">
    <source>
        <dbReference type="HAMAP-Rule" id="MF_00387"/>
    </source>
</evidence>
<reference key="1">
    <citation type="submission" date="2007-05" db="EMBL/GenBank/DDBJ databases">
        <title>Complete sequence of Pseudomonas putida F1.</title>
        <authorList>
            <consortium name="US DOE Joint Genome Institute"/>
            <person name="Copeland A."/>
            <person name="Lucas S."/>
            <person name="Lapidus A."/>
            <person name="Barry K."/>
            <person name="Detter J.C."/>
            <person name="Glavina del Rio T."/>
            <person name="Hammon N."/>
            <person name="Israni S."/>
            <person name="Dalin E."/>
            <person name="Tice H."/>
            <person name="Pitluck S."/>
            <person name="Chain P."/>
            <person name="Malfatti S."/>
            <person name="Shin M."/>
            <person name="Vergez L."/>
            <person name="Schmutz J."/>
            <person name="Larimer F."/>
            <person name="Land M."/>
            <person name="Hauser L."/>
            <person name="Kyrpides N."/>
            <person name="Lykidis A."/>
            <person name="Parales R."/>
            <person name="Richardson P."/>
        </authorList>
    </citation>
    <scope>NUCLEOTIDE SEQUENCE [LARGE SCALE GENOMIC DNA]</scope>
    <source>
        <strain>ATCC 700007 / DSM 6899 / JCM 31910 / BCRC 17059 / LMG 24140 / F1</strain>
    </source>
</reference>
<keyword id="KW-0012">Acyltransferase</keyword>
<keyword id="KW-0963">Cytoplasm</keyword>
<keyword id="KW-0441">Lipid A biosynthesis</keyword>
<keyword id="KW-0444">Lipid biosynthesis</keyword>
<keyword id="KW-0443">Lipid metabolism</keyword>
<keyword id="KW-0677">Repeat</keyword>
<keyword id="KW-0808">Transferase</keyword>